<sequence length="444" mass="49093">MGNSFTCISHEQEQRPKKSSGGGGNNSGKYKYVRRLSLMPSFRRRTLLPSLSCSGSSSTSSSKKGGIKAKTKKIRERHHHHHQDHEKDSHIIQEQTLAATNLLFNQTPRNSNSVVPPSFRRSTSVVYPSAQPSGTSSGPVSAVQTPKKSSAGFVRSSSSRQRSSTDPMIKPNQLVDKELNKVEGSETKRFVLVHGGGFGAWCWYKTITLLEKHGFQVDAVELTGSGVSSIDTNNITSLAHYSKPLLHFFESLKPTEKVILVGHDFGGACMSYAMEMFPTKIAKAVFISAAMLANGQSTLDLFNQQLGSNDLMQQAQIFLYANGKKNPPTAVDFDRSLLRDFLFNQSPPKDLALASVSIRPIPFAPVSEKVHVSEKNYGSIRRFYIKTMEDYAVPVLLQEAMIKLNPPEQVFQLKGSDHAPFFSRPQSLNKILVEISQIPFKKSS</sequence>
<comment type="function">
    <text>Putative methylesterase.</text>
</comment>
<comment type="subcellular location">
    <subcellularLocation>
        <location evidence="6">Plastid</location>
        <location evidence="6">Chloroplast</location>
    </subcellularLocation>
</comment>
<comment type="similarity">
    <text evidence="6">Belongs to the AB hydrolase superfamily. Methylesterase family.</text>
</comment>
<comment type="sequence caution" evidence="6">
    <conflict type="erroneous gene model prediction">
        <sequence resource="EMBL-CDS" id="AAF98579"/>
    </conflict>
    <text>The predicted gene has been split into 2 genes: At1g26355 and At1g26360.</text>
</comment>
<protein>
    <recommendedName>
        <fullName evidence="5">Putative methylesterase 13, chloroplastic</fullName>
        <shortName evidence="5">AtMES13</shortName>
        <ecNumber evidence="2">3.1.1.-</ecNumber>
    </recommendedName>
</protein>
<proteinExistence type="evidence at transcript level"/>
<accession>F4IE65</accession>
<accession>Q9FZC2</accession>
<gene>
    <name evidence="5" type="primary">MES13</name>
    <name evidence="7" type="ordered locus">At1g26360</name>
    <name evidence="8" type="ORF">T1K7.26</name>
</gene>
<reference key="1">
    <citation type="journal article" date="2000" name="Nature">
        <title>Sequence and analysis of chromosome 1 of the plant Arabidopsis thaliana.</title>
        <authorList>
            <person name="Theologis A."/>
            <person name="Ecker J.R."/>
            <person name="Palm C.J."/>
            <person name="Federspiel N.A."/>
            <person name="Kaul S."/>
            <person name="White O."/>
            <person name="Alonso J."/>
            <person name="Altafi H."/>
            <person name="Araujo R."/>
            <person name="Bowman C.L."/>
            <person name="Brooks S.Y."/>
            <person name="Buehler E."/>
            <person name="Chan A."/>
            <person name="Chao Q."/>
            <person name="Chen H."/>
            <person name="Cheuk R.F."/>
            <person name="Chin C.W."/>
            <person name="Chung M.K."/>
            <person name="Conn L."/>
            <person name="Conway A.B."/>
            <person name="Conway A.R."/>
            <person name="Creasy T.H."/>
            <person name="Dewar K."/>
            <person name="Dunn P."/>
            <person name="Etgu P."/>
            <person name="Feldblyum T.V."/>
            <person name="Feng J.-D."/>
            <person name="Fong B."/>
            <person name="Fujii C.Y."/>
            <person name="Gill J.E."/>
            <person name="Goldsmith A.D."/>
            <person name="Haas B."/>
            <person name="Hansen N.F."/>
            <person name="Hughes B."/>
            <person name="Huizar L."/>
            <person name="Hunter J.L."/>
            <person name="Jenkins J."/>
            <person name="Johnson-Hopson C."/>
            <person name="Khan S."/>
            <person name="Khaykin E."/>
            <person name="Kim C.J."/>
            <person name="Koo H.L."/>
            <person name="Kremenetskaia I."/>
            <person name="Kurtz D.B."/>
            <person name="Kwan A."/>
            <person name="Lam B."/>
            <person name="Langin-Hooper S."/>
            <person name="Lee A."/>
            <person name="Lee J.M."/>
            <person name="Lenz C.A."/>
            <person name="Li J.H."/>
            <person name="Li Y.-P."/>
            <person name="Lin X."/>
            <person name="Liu S.X."/>
            <person name="Liu Z.A."/>
            <person name="Luros J.S."/>
            <person name="Maiti R."/>
            <person name="Marziali A."/>
            <person name="Militscher J."/>
            <person name="Miranda M."/>
            <person name="Nguyen M."/>
            <person name="Nierman W.C."/>
            <person name="Osborne B.I."/>
            <person name="Pai G."/>
            <person name="Peterson J."/>
            <person name="Pham P.K."/>
            <person name="Rizzo M."/>
            <person name="Rooney T."/>
            <person name="Rowley D."/>
            <person name="Sakano H."/>
            <person name="Salzberg S.L."/>
            <person name="Schwartz J.R."/>
            <person name="Shinn P."/>
            <person name="Southwick A.M."/>
            <person name="Sun H."/>
            <person name="Tallon L.J."/>
            <person name="Tambunga G."/>
            <person name="Toriumi M.J."/>
            <person name="Town C.D."/>
            <person name="Utterback T."/>
            <person name="Van Aken S."/>
            <person name="Vaysberg M."/>
            <person name="Vysotskaia V.S."/>
            <person name="Walker M."/>
            <person name="Wu D."/>
            <person name="Yu G."/>
            <person name="Fraser C.M."/>
            <person name="Venter J.C."/>
            <person name="Davis R.W."/>
        </authorList>
    </citation>
    <scope>NUCLEOTIDE SEQUENCE [LARGE SCALE GENOMIC DNA]</scope>
    <source>
        <strain>cv. Columbia</strain>
    </source>
</reference>
<reference key="2">
    <citation type="journal article" date="2017" name="Plant J.">
        <title>Araport11: a complete reannotation of the Arabidopsis thaliana reference genome.</title>
        <authorList>
            <person name="Cheng C.Y."/>
            <person name="Krishnakumar V."/>
            <person name="Chan A.P."/>
            <person name="Thibaud-Nissen F."/>
            <person name="Schobel S."/>
            <person name="Town C.D."/>
        </authorList>
    </citation>
    <scope>GENOME REANNOTATION</scope>
    <source>
        <strain>cv. Columbia</strain>
    </source>
</reference>
<reference key="3">
    <citation type="journal article" date="2004" name="Genome Res.">
        <title>Whole genome sequence comparisons and 'full-length' cDNA sequences: a combined approach to evaluate and improve Arabidopsis genome annotation.</title>
        <authorList>
            <person name="Castelli V."/>
            <person name="Aury J.-M."/>
            <person name="Jaillon O."/>
            <person name="Wincker P."/>
            <person name="Clepet C."/>
            <person name="Menard M."/>
            <person name="Cruaud C."/>
            <person name="Quetier F."/>
            <person name="Scarpelli C."/>
            <person name="Schaechter V."/>
            <person name="Temple G."/>
            <person name="Caboche M."/>
            <person name="Weissenbach J."/>
            <person name="Salanoubat M."/>
        </authorList>
    </citation>
    <scope>NUCLEOTIDE SEQUENCE [LARGE SCALE MRNA]</scope>
    <source>
        <strain>cv. Columbia</strain>
    </source>
</reference>
<reference key="4">
    <citation type="journal article" date="2008" name="Plant Physiol.">
        <title>Inactive methyl indole-3-acetic acid ester can be hydrolyzed and activated by several esterases belonging to the AtMES esterase family of Arabidopsis.</title>
        <authorList>
            <person name="Yang Y."/>
            <person name="Xu R."/>
            <person name="Ma C.J."/>
            <person name="Vlot A.C."/>
            <person name="Klessig D.F."/>
            <person name="Pichersky E."/>
        </authorList>
    </citation>
    <scope>GENE FAMILY</scope>
</reference>
<organism>
    <name type="scientific">Arabidopsis thaliana</name>
    <name type="common">Mouse-ear cress</name>
    <dbReference type="NCBI Taxonomy" id="3702"/>
    <lineage>
        <taxon>Eukaryota</taxon>
        <taxon>Viridiplantae</taxon>
        <taxon>Streptophyta</taxon>
        <taxon>Embryophyta</taxon>
        <taxon>Tracheophyta</taxon>
        <taxon>Spermatophyta</taxon>
        <taxon>Magnoliopsida</taxon>
        <taxon>eudicotyledons</taxon>
        <taxon>Gunneridae</taxon>
        <taxon>Pentapetalae</taxon>
        <taxon>rosids</taxon>
        <taxon>malvids</taxon>
        <taxon>Brassicales</taxon>
        <taxon>Brassicaceae</taxon>
        <taxon>Camelineae</taxon>
        <taxon>Arabidopsis</taxon>
    </lineage>
</organism>
<evidence type="ECO:0000250" key="1">
    <source>
        <dbReference type="UniProtKB" id="Q6RYA0"/>
    </source>
</evidence>
<evidence type="ECO:0000250" key="2">
    <source>
        <dbReference type="UniProtKB" id="Q9SG92"/>
    </source>
</evidence>
<evidence type="ECO:0000255" key="3"/>
<evidence type="ECO:0000256" key="4">
    <source>
        <dbReference type="SAM" id="MobiDB-lite"/>
    </source>
</evidence>
<evidence type="ECO:0000303" key="5">
    <source>
    </source>
</evidence>
<evidence type="ECO:0000305" key="6"/>
<evidence type="ECO:0000312" key="7">
    <source>
        <dbReference type="Araport" id="AT1G26360"/>
    </source>
</evidence>
<evidence type="ECO:0000312" key="8">
    <source>
        <dbReference type="EMBL" id="AAF98579.1"/>
    </source>
</evidence>
<feature type="transit peptide" description="Chloroplast" evidence="3">
    <location>
        <begin position="1"/>
        <end position="60"/>
    </location>
</feature>
<feature type="chain" id="PRO_0000418187" description="Putative methylesterase 13, chloroplastic">
    <location>
        <begin position="61"/>
        <end position="444"/>
    </location>
</feature>
<feature type="domain" description="AB hydrolase-1" evidence="3">
    <location>
        <begin position="190"/>
        <end position="310"/>
    </location>
</feature>
<feature type="region of interest" description="Disordered" evidence="4">
    <location>
        <begin position="1"/>
        <end position="32"/>
    </location>
</feature>
<feature type="region of interest" description="Disordered" evidence="4">
    <location>
        <begin position="49"/>
        <end position="90"/>
    </location>
</feature>
<feature type="region of interest" description="Disordered" evidence="4">
    <location>
        <begin position="124"/>
        <end position="176"/>
    </location>
</feature>
<feature type="compositionally biased region" description="Low complexity" evidence="4">
    <location>
        <begin position="49"/>
        <end position="64"/>
    </location>
</feature>
<feature type="compositionally biased region" description="Basic residues" evidence="4">
    <location>
        <begin position="65"/>
        <end position="82"/>
    </location>
</feature>
<feature type="compositionally biased region" description="Polar residues" evidence="4">
    <location>
        <begin position="124"/>
        <end position="148"/>
    </location>
</feature>
<feature type="compositionally biased region" description="Low complexity" evidence="4">
    <location>
        <begin position="149"/>
        <end position="164"/>
    </location>
</feature>
<feature type="active site" description="Acyl-ester intermediate" evidence="1">
    <location>
        <position position="264"/>
    </location>
</feature>
<feature type="active site" description="Charge relay system" evidence="1">
    <location>
        <position position="390"/>
    </location>
</feature>
<feature type="active site" description="Charge relay system" evidence="1">
    <location>
        <position position="418"/>
    </location>
</feature>
<dbReference type="EC" id="3.1.1.-" evidence="2"/>
<dbReference type="EMBL" id="AC013427">
    <property type="protein sequence ID" value="AAF98579.1"/>
    <property type="status" value="ALT_SEQ"/>
    <property type="molecule type" value="Genomic_DNA"/>
</dbReference>
<dbReference type="EMBL" id="CP002684">
    <property type="protein sequence ID" value="AEE30682.1"/>
    <property type="molecule type" value="Genomic_DNA"/>
</dbReference>
<dbReference type="EMBL" id="BX816109">
    <property type="status" value="NOT_ANNOTATED_CDS"/>
    <property type="molecule type" value="mRNA"/>
</dbReference>
<dbReference type="RefSeq" id="NP_173960.2">
    <property type="nucleotide sequence ID" value="NM_102400.3"/>
</dbReference>
<dbReference type="SMR" id="F4IE65"/>
<dbReference type="STRING" id="3702.F4IE65"/>
<dbReference type="ESTHER" id="arath-F4IE65">
    <property type="family name" value="Hydroxynitrile_lyase"/>
</dbReference>
<dbReference type="MEROPS" id="S33.A69"/>
<dbReference type="iPTMnet" id="F4IE65"/>
<dbReference type="PaxDb" id="3702-AT1G26360.1"/>
<dbReference type="EnsemblPlants" id="AT1G26360.1">
    <property type="protein sequence ID" value="AT1G26360.1"/>
    <property type="gene ID" value="AT1G26360"/>
</dbReference>
<dbReference type="GeneID" id="839178"/>
<dbReference type="Gramene" id="AT1G26360.1">
    <property type="protein sequence ID" value="AT1G26360.1"/>
    <property type="gene ID" value="AT1G26360"/>
</dbReference>
<dbReference type="KEGG" id="ath:AT1G26360"/>
<dbReference type="Araport" id="AT1G26360"/>
<dbReference type="TAIR" id="AT1G26360">
    <property type="gene designation" value="MES13"/>
</dbReference>
<dbReference type="eggNOG" id="ENOG502S15T">
    <property type="taxonomic scope" value="Eukaryota"/>
</dbReference>
<dbReference type="HOGENOM" id="CLU_046066_8_1_1"/>
<dbReference type="InParanoid" id="F4IE65"/>
<dbReference type="OMA" id="CISHEQE"/>
<dbReference type="PRO" id="PR:F4IE65"/>
<dbReference type="Proteomes" id="UP000006548">
    <property type="component" value="Chromosome 1"/>
</dbReference>
<dbReference type="ExpressionAtlas" id="F4IE65">
    <property type="expression patterns" value="baseline and differential"/>
</dbReference>
<dbReference type="GO" id="GO:0009507">
    <property type="term" value="C:chloroplast"/>
    <property type="evidence" value="ECO:0007669"/>
    <property type="project" value="UniProtKB-SubCell"/>
</dbReference>
<dbReference type="GO" id="GO:0016787">
    <property type="term" value="F:hydrolase activity"/>
    <property type="evidence" value="ECO:0007669"/>
    <property type="project" value="UniProtKB-KW"/>
</dbReference>
<dbReference type="FunFam" id="3.40.50.1820:FF:000025">
    <property type="entry name" value="putative methylesterase 11, chloroplastic"/>
    <property type="match status" value="1"/>
</dbReference>
<dbReference type="Gene3D" id="3.40.50.1820">
    <property type="entry name" value="alpha/beta hydrolase"/>
    <property type="match status" value="1"/>
</dbReference>
<dbReference type="InterPro" id="IPR000073">
    <property type="entry name" value="AB_hydrolase_1"/>
</dbReference>
<dbReference type="InterPro" id="IPR029058">
    <property type="entry name" value="AB_hydrolase_fold"/>
</dbReference>
<dbReference type="InterPro" id="IPR045889">
    <property type="entry name" value="MES/HNL"/>
</dbReference>
<dbReference type="PANTHER" id="PTHR10992:SF1019">
    <property type="entry name" value="METHYLESTERASE 13, CHLOROPLASTIC-RELATED"/>
    <property type="match status" value="1"/>
</dbReference>
<dbReference type="PANTHER" id="PTHR10992">
    <property type="entry name" value="METHYLESTERASE FAMILY MEMBER"/>
    <property type="match status" value="1"/>
</dbReference>
<dbReference type="Pfam" id="PF12697">
    <property type="entry name" value="Abhydrolase_6"/>
    <property type="match status" value="1"/>
</dbReference>
<dbReference type="SUPFAM" id="SSF53474">
    <property type="entry name" value="alpha/beta-Hydrolases"/>
    <property type="match status" value="1"/>
</dbReference>
<keyword id="KW-0150">Chloroplast</keyword>
<keyword id="KW-0378">Hydrolase</keyword>
<keyword id="KW-0934">Plastid</keyword>
<keyword id="KW-1185">Reference proteome</keyword>
<keyword id="KW-0809">Transit peptide</keyword>
<name>MES13_ARATH</name>